<dbReference type="EMBL" id="CP000485">
    <property type="protein sequence ID" value="ABK83528.1"/>
    <property type="status" value="ALT_INIT"/>
    <property type="molecule type" value="Genomic_DNA"/>
</dbReference>
<dbReference type="RefSeq" id="WP_001148025.1">
    <property type="nucleotide sequence ID" value="NC_008600.1"/>
</dbReference>
<dbReference type="SMR" id="A0R8I5"/>
<dbReference type="GeneID" id="93010938"/>
<dbReference type="KEGG" id="btl:BALH_0113"/>
<dbReference type="HOGENOM" id="CLU_083987_3_3_9"/>
<dbReference type="GO" id="GO:0022625">
    <property type="term" value="C:cytosolic large ribosomal subunit"/>
    <property type="evidence" value="ECO:0007669"/>
    <property type="project" value="TreeGrafter"/>
</dbReference>
<dbReference type="GO" id="GO:0019843">
    <property type="term" value="F:rRNA binding"/>
    <property type="evidence" value="ECO:0007669"/>
    <property type="project" value="UniProtKB-UniRule"/>
</dbReference>
<dbReference type="GO" id="GO:0003735">
    <property type="term" value="F:structural constituent of ribosome"/>
    <property type="evidence" value="ECO:0007669"/>
    <property type="project" value="InterPro"/>
</dbReference>
<dbReference type="GO" id="GO:0006412">
    <property type="term" value="P:translation"/>
    <property type="evidence" value="ECO:0007669"/>
    <property type="project" value="UniProtKB-UniRule"/>
</dbReference>
<dbReference type="CDD" id="cd00336">
    <property type="entry name" value="Ribosomal_L22"/>
    <property type="match status" value="1"/>
</dbReference>
<dbReference type="FunFam" id="3.90.470.10:FF:000001">
    <property type="entry name" value="50S ribosomal protein L22"/>
    <property type="match status" value="1"/>
</dbReference>
<dbReference type="Gene3D" id="3.90.470.10">
    <property type="entry name" value="Ribosomal protein L22/L17"/>
    <property type="match status" value="1"/>
</dbReference>
<dbReference type="HAMAP" id="MF_01331_B">
    <property type="entry name" value="Ribosomal_uL22_B"/>
    <property type="match status" value="1"/>
</dbReference>
<dbReference type="InterPro" id="IPR001063">
    <property type="entry name" value="Ribosomal_uL22"/>
</dbReference>
<dbReference type="InterPro" id="IPR005727">
    <property type="entry name" value="Ribosomal_uL22_bac/chlpt-type"/>
</dbReference>
<dbReference type="InterPro" id="IPR047867">
    <property type="entry name" value="Ribosomal_uL22_bac/org-type"/>
</dbReference>
<dbReference type="InterPro" id="IPR018260">
    <property type="entry name" value="Ribosomal_uL22_CS"/>
</dbReference>
<dbReference type="InterPro" id="IPR036394">
    <property type="entry name" value="Ribosomal_uL22_sf"/>
</dbReference>
<dbReference type="NCBIfam" id="TIGR01044">
    <property type="entry name" value="rplV_bact"/>
    <property type="match status" value="1"/>
</dbReference>
<dbReference type="PANTHER" id="PTHR13501">
    <property type="entry name" value="CHLOROPLAST 50S RIBOSOMAL PROTEIN L22-RELATED"/>
    <property type="match status" value="1"/>
</dbReference>
<dbReference type="PANTHER" id="PTHR13501:SF8">
    <property type="entry name" value="LARGE RIBOSOMAL SUBUNIT PROTEIN UL22M"/>
    <property type="match status" value="1"/>
</dbReference>
<dbReference type="Pfam" id="PF00237">
    <property type="entry name" value="Ribosomal_L22"/>
    <property type="match status" value="1"/>
</dbReference>
<dbReference type="SUPFAM" id="SSF54843">
    <property type="entry name" value="Ribosomal protein L22"/>
    <property type="match status" value="1"/>
</dbReference>
<dbReference type="PROSITE" id="PS00464">
    <property type="entry name" value="RIBOSOMAL_L22"/>
    <property type="match status" value="1"/>
</dbReference>
<feature type="chain" id="PRO_0000354445" description="Large ribosomal subunit protein uL22">
    <location>
        <begin position="1"/>
        <end position="113"/>
    </location>
</feature>
<organism>
    <name type="scientific">Bacillus thuringiensis (strain Al Hakam)</name>
    <dbReference type="NCBI Taxonomy" id="412694"/>
    <lineage>
        <taxon>Bacteria</taxon>
        <taxon>Bacillati</taxon>
        <taxon>Bacillota</taxon>
        <taxon>Bacilli</taxon>
        <taxon>Bacillales</taxon>
        <taxon>Bacillaceae</taxon>
        <taxon>Bacillus</taxon>
        <taxon>Bacillus cereus group</taxon>
    </lineage>
</organism>
<name>RL22_BACAH</name>
<evidence type="ECO:0000255" key="1">
    <source>
        <dbReference type="HAMAP-Rule" id="MF_01331"/>
    </source>
</evidence>
<evidence type="ECO:0000305" key="2"/>
<gene>
    <name evidence="1" type="primary">rplV</name>
    <name type="ordered locus">BALH_0113</name>
</gene>
<reference key="1">
    <citation type="journal article" date="2007" name="J. Bacteriol.">
        <title>The complete genome sequence of Bacillus thuringiensis Al Hakam.</title>
        <authorList>
            <person name="Challacombe J.F."/>
            <person name="Altherr M.R."/>
            <person name="Xie G."/>
            <person name="Bhotika S.S."/>
            <person name="Brown N."/>
            <person name="Bruce D."/>
            <person name="Campbell C.S."/>
            <person name="Campbell M.L."/>
            <person name="Chen J."/>
            <person name="Chertkov O."/>
            <person name="Cleland C."/>
            <person name="Dimitrijevic M."/>
            <person name="Doggett N.A."/>
            <person name="Fawcett J.J."/>
            <person name="Glavina T."/>
            <person name="Goodwin L.A."/>
            <person name="Green L.D."/>
            <person name="Han C.S."/>
            <person name="Hill K.K."/>
            <person name="Hitchcock P."/>
            <person name="Jackson P.J."/>
            <person name="Keim P."/>
            <person name="Kewalramani A.R."/>
            <person name="Longmire J."/>
            <person name="Lucas S."/>
            <person name="Malfatti S."/>
            <person name="Martinez D."/>
            <person name="McMurry K."/>
            <person name="Meincke L.J."/>
            <person name="Misra M."/>
            <person name="Moseman B.L."/>
            <person name="Mundt M."/>
            <person name="Munk A.C."/>
            <person name="Okinaka R.T."/>
            <person name="Parson-Quintana B."/>
            <person name="Reilly L.P."/>
            <person name="Richardson P."/>
            <person name="Robinson D.L."/>
            <person name="Saunders E."/>
            <person name="Tapia R."/>
            <person name="Tesmer J.G."/>
            <person name="Thayer N."/>
            <person name="Thompson L.S."/>
            <person name="Tice H."/>
            <person name="Ticknor L.O."/>
            <person name="Wills P.L."/>
            <person name="Gilna P."/>
            <person name="Brettin T.S."/>
        </authorList>
    </citation>
    <scope>NUCLEOTIDE SEQUENCE [LARGE SCALE GENOMIC DNA]</scope>
    <source>
        <strain>Al Hakam</strain>
    </source>
</reference>
<sequence>MQAKAVARTVRIAPRKVRLVVDLIRGKQVGEAIAILNHTPKTASPVVEKVLKSAIANAEHNYEMDINSLVVEKVFVDEGPTLKRFRPRAMGRASQINKRTSHITVVVSEKKEG</sequence>
<keyword id="KW-0687">Ribonucleoprotein</keyword>
<keyword id="KW-0689">Ribosomal protein</keyword>
<keyword id="KW-0694">RNA-binding</keyword>
<keyword id="KW-0699">rRNA-binding</keyword>
<protein>
    <recommendedName>
        <fullName evidence="1">Large ribosomal subunit protein uL22</fullName>
    </recommendedName>
    <alternativeName>
        <fullName evidence="2">50S ribosomal protein L22</fullName>
    </alternativeName>
</protein>
<proteinExistence type="inferred from homology"/>
<comment type="function">
    <text evidence="1">This protein binds specifically to 23S rRNA; its binding is stimulated by other ribosomal proteins, e.g. L4, L17, and L20. It is important during the early stages of 50S assembly. It makes multiple contacts with different domains of the 23S rRNA in the assembled 50S subunit and ribosome (By similarity).</text>
</comment>
<comment type="function">
    <text evidence="1">The globular domain of the protein is located near the polypeptide exit tunnel on the outside of the subunit, while an extended beta-hairpin is found that lines the wall of the exit tunnel in the center of the 70S ribosome.</text>
</comment>
<comment type="subunit">
    <text evidence="1">Part of the 50S ribosomal subunit.</text>
</comment>
<comment type="similarity">
    <text evidence="1">Belongs to the universal ribosomal protein uL22 family.</text>
</comment>
<comment type="sequence caution" evidence="2">
    <conflict type="erroneous initiation">
        <sequence resource="EMBL-CDS" id="ABK83528"/>
    </conflict>
</comment>
<accession>A0R8I5</accession>